<accession>A5U0I9</accession>
<evidence type="ECO:0000255" key="1">
    <source>
        <dbReference type="HAMAP-Rule" id="MF_00467"/>
    </source>
</evidence>
<protein>
    <recommendedName>
        <fullName evidence="1">Probable M18 family aminopeptidase 2</fullName>
        <ecNumber evidence="1">3.4.11.-</ecNumber>
    </recommendedName>
</protein>
<comment type="cofactor">
    <cofactor evidence="1">
        <name>Zn(2+)</name>
        <dbReference type="ChEBI" id="CHEBI:29105"/>
    </cofactor>
</comment>
<comment type="similarity">
    <text evidence="1">Belongs to the peptidase M18 family.</text>
</comment>
<proteinExistence type="inferred from homology"/>
<feature type="chain" id="PRO_1000013699" description="Probable M18 family aminopeptidase 2">
    <location>
        <begin position="1"/>
        <end position="433"/>
    </location>
</feature>
<feature type="binding site" evidence="1">
    <location>
        <position position="79"/>
    </location>
    <ligand>
        <name>Zn(2+)</name>
        <dbReference type="ChEBI" id="CHEBI:29105"/>
    </ligand>
</feature>
<feature type="binding site" evidence="1">
    <location>
        <position position="153"/>
    </location>
    <ligand>
        <name>Zn(2+)</name>
        <dbReference type="ChEBI" id="CHEBI:29105"/>
    </ligand>
</feature>
<feature type="binding site" evidence="1">
    <location>
        <position position="404"/>
    </location>
    <ligand>
        <name>Zn(2+)</name>
        <dbReference type="ChEBI" id="CHEBI:29105"/>
    </ligand>
</feature>
<gene>
    <name evidence="1" type="primary">apeB</name>
    <name type="ordered locus">MRA_0810</name>
</gene>
<sequence>MAATAHGLCEFIDASPSPFHVCATVAGRLLGAGYRELREADRWPDKPGRYFTVRAGSLVAWNAEQSGHTQVPFRIVGAHTDSPNLRVKQHPDRLVAGWHVVALQPYGGVWLHSWLDRDLGISGRLSVRDGTGVSHRLVLIDDPILRVPQLAIHLAEDRKSLTLDPQRHINAVWGVGERVESFVGYVAQRAGVAAADVLAADLMTHDLTPSALIGASVNGTASLLSAPRLDNQASCYAGMEALLAVDVDSASSGFVPVLAIFDHEEVGSASGHGAQSDLLSSVLERIVLAAGGTREDFLRRLTTSMLASADMAHATHPNYPDRHEPSHPIEVNAGPVLKVHPNLRYATDGRTAAAFALACQRAGVPMQRYEHRADLPCGSTIGPLAAARTGIPTVDVGAAQLAMHSARELMGAHDVAAYSAALQAFLSAELSEA</sequence>
<keyword id="KW-0031">Aminopeptidase</keyword>
<keyword id="KW-0378">Hydrolase</keyword>
<keyword id="KW-0479">Metal-binding</keyword>
<keyword id="KW-0482">Metalloprotease</keyword>
<keyword id="KW-0645">Protease</keyword>
<keyword id="KW-1185">Reference proteome</keyword>
<keyword id="KW-0862">Zinc</keyword>
<organism>
    <name type="scientific">Mycobacterium tuberculosis (strain ATCC 25177 / H37Ra)</name>
    <dbReference type="NCBI Taxonomy" id="419947"/>
    <lineage>
        <taxon>Bacteria</taxon>
        <taxon>Bacillati</taxon>
        <taxon>Actinomycetota</taxon>
        <taxon>Actinomycetes</taxon>
        <taxon>Mycobacteriales</taxon>
        <taxon>Mycobacteriaceae</taxon>
        <taxon>Mycobacterium</taxon>
        <taxon>Mycobacterium tuberculosis complex</taxon>
    </lineage>
</organism>
<name>APEB_MYCTA</name>
<dbReference type="EC" id="3.4.11.-" evidence="1"/>
<dbReference type="EMBL" id="CP000611">
    <property type="protein sequence ID" value="ABQ72539.1"/>
    <property type="molecule type" value="Genomic_DNA"/>
</dbReference>
<dbReference type="RefSeq" id="WP_003916725.1">
    <property type="nucleotide sequence ID" value="NZ_CP016972.1"/>
</dbReference>
<dbReference type="SMR" id="A5U0I9"/>
<dbReference type="KEGG" id="mra:MRA_0810"/>
<dbReference type="eggNOG" id="COG1362">
    <property type="taxonomic scope" value="Bacteria"/>
</dbReference>
<dbReference type="HOGENOM" id="CLU_019532_2_0_11"/>
<dbReference type="Proteomes" id="UP000001988">
    <property type="component" value="Chromosome"/>
</dbReference>
<dbReference type="GO" id="GO:0005737">
    <property type="term" value="C:cytoplasm"/>
    <property type="evidence" value="ECO:0007669"/>
    <property type="project" value="UniProtKB-ARBA"/>
</dbReference>
<dbReference type="GO" id="GO:0004177">
    <property type="term" value="F:aminopeptidase activity"/>
    <property type="evidence" value="ECO:0007669"/>
    <property type="project" value="UniProtKB-UniRule"/>
</dbReference>
<dbReference type="GO" id="GO:0008237">
    <property type="term" value="F:metallopeptidase activity"/>
    <property type="evidence" value="ECO:0007669"/>
    <property type="project" value="UniProtKB-UniRule"/>
</dbReference>
<dbReference type="GO" id="GO:0008270">
    <property type="term" value="F:zinc ion binding"/>
    <property type="evidence" value="ECO:0007669"/>
    <property type="project" value="UniProtKB-UniRule"/>
</dbReference>
<dbReference type="GO" id="GO:0006508">
    <property type="term" value="P:proteolysis"/>
    <property type="evidence" value="ECO:0007669"/>
    <property type="project" value="UniProtKB-UniRule"/>
</dbReference>
<dbReference type="CDD" id="cd05658">
    <property type="entry name" value="M18_DAP"/>
    <property type="match status" value="1"/>
</dbReference>
<dbReference type="FunFam" id="2.30.250.10:FF:000004">
    <property type="entry name" value="Probable M18 family aminopeptidase 2"/>
    <property type="match status" value="1"/>
</dbReference>
<dbReference type="Gene3D" id="2.30.250.10">
    <property type="entry name" value="Aminopeptidase i, Domain 2"/>
    <property type="match status" value="1"/>
</dbReference>
<dbReference type="Gene3D" id="3.40.630.10">
    <property type="entry name" value="Zn peptidases"/>
    <property type="match status" value="1"/>
</dbReference>
<dbReference type="HAMAP" id="MF_00467">
    <property type="entry name" value="Aminopeptidase_M18_2"/>
    <property type="match status" value="1"/>
</dbReference>
<dbReference type="InterPro" id="IPR022984">
    <property type="entry name" value="M18_aminopeptidase_2"/>
</dbReference>
<dbReference type="InterPro" id="IPR001948">
    <property type="entry name" value="Peptidase_M18"/>
</dbReference>
<dbReference type="InterPro" id="IPR023358">
    <property type="entry name" value="Peptidase_M18_dom2"/>
</dbReference>
<dbReference type="NCBIfam" id="NF002759">
    <property type="entry name" value="PRK02813.1"/>
    <property type="match status" value="1"/>
</dbReference>
<dbReference type="PANTHER" id="PTHR28570">
    <property type="entry name" value="ASPARTYL AMINOPEPTIDASE"/>
    <property type="match status" value="1"/>
</dbReference>
<dbReference type="PANTHER" id="PTHR28570:SF3">
    <property type="entry name" value="ASPARTYL AMINOPEPTIDASE"/>
    <property type="match status" value="1"/>
</dbReference>
<dbReference type="Pfam" id="PF02127">
    <property type="entry name" value="Peptidase_M18"/>
    <property type="match status" value="1"/>
</dbReference>
<dbReference type="PRINTS" id="PR00932">
    <property type="entry name" value="AMINO1PTASE"/>
</dbReference>
<dbReference type="SUPFAM" id="SSF101821">
    <property type="entry name" value="Aminopeptidase/glucanase lid domain"/>
    <property type="match status" value="1"/>
</dbReference>
<dbReference type="SUPFAM" id="SSF53187">
    <property type="entry name" value="Zn-dependent exopeptidases"/>
    <property type="match status" value="1"/>
</dbReference>
<reference key="1">
    <citation type="journal article" date="2008" name="PLoS ONE">
        <title>Genetic basis of virulence attenuation revealed by comparative genomic analysis of Mycobacterium tuberculosis strain H37Ra versus H37Rv.</title>
        <authorList>
            <person name="Zheng H."/>
            <person name="Lu L."/>
            <person name="Wang B."/>
            <person name="Pu S."/>
            <person name="Zhang X."/>
            <person name="Zhu G."/>
            <person name="Shi W."/>
            <person name="Zhang L."/>
            <person name="Wang H."/>
            <person name="Wang S."/>
            <person name="Zhao G."/>
            <person name="Zhang Y."/>
        </authorList>
    </citation>
    <scope>NUCLEOTIDE SEQUENCE [LARGE SCALE GENOMIC DNA]</scope>
    <source>
        <strain>ATCC 25177 / H37Ra</strain>
    </source>
</reference>